<sequence length="56" mass="6230">MADSTATCIDIILAIILPPLGVFFKFGCGIEFWICLLLTFFGYLPGIIYAVWVITK</sequence>
<comment type="function">
    <text evidence="1">Plays a role in the regulation of membrane potential. Could mediate a proton leak (By similarity).</text>
</comment>
<comment type="subcellular location">
    <subcellularLocation>
        <location evidence="4">Membrane</location>
        <topology evidence="4">Multi-pass membrane protein</topology>
    </subcellularLocation>
</comment>
<comment type="tissue specificity">
    <text evidence="3">Expressed in shoot of cold stressed seedlings.</text>
</comment>
<comment type="induction">
    <text evidence="3">Early induction by low temperature and abscisic acid (ABA). Late induction by drought and salt stresses.</text>
</comment>
<comment type="similarity">
    <text evidence="4">Belongs to the UPF0057 (PMP3) family.</text>
</comment>
<proteinExistence type="evidence at transcript level"/>
<gene>
    <name type="primary">LTI6A</name>
    <name type="synonym">DRR1</name>
    <name type="ordered locus">Os07g0635900</name>
    <name type="ordered locus">LOC_Os07g44180</name>
    <name type="ORF">OJ1136_D11.102</name>
    <name evidence="5" type="ORF">OsJ_25274</name>
</gene>
<name>LTI6A_ORYSJ</name>
<feature type="chain" id="PRO_0000193981" description="Hydrophobic protein LTI6A">
    <location>
        <begin position="1"/>
        <end position="56"/>
    </location>
</feature>
<feature type="transmembrane region" description="Helical" evidence="2">
    <location>
        <begin position="11"/>
        <end position="31"/>
    </location>
</feature>
<feature type="transmembrane region" description="Helical" evidence="2">
    <location>
        <begin position="34"/>
        <end position="54"/>
    </location>
</feature>
<reference key="1">
    <citation type="journal article" date="2005" name="Gene">
        <title>The OsLti6 genes encoding low-molecular-weight membrane proteins are differentially expressed in rice cultivars with contrasting sensitivity to low temperature.</title>
        <authorList>
            <person name="Morsy M.R."/>
            <person name="Almutairi A.M."/>
            <person name="Gibbons J."/>
            <person name="Yun S.J."/>
            <person name="De Los Reyes B.G."/>
        </authorList>
    </citation>
    <scope>NUCLEOTIDE SEQUENCE [MRNA]</scope>
    <scope>SUBCELLULAR LOCATION</scope>
    <scope>TISSUE SPECIFICITY</scope>
    <scope>INDUCTION</scope>
    <source>
        <strain>cv. CT6748-8-CA-17</strain>
        <tissue>Seedling</tissue>
    </source>
</reference>
<reference key="2">
    <citation type="submission" date="2004-02" db="EMBL/GenBank/DDBJ databases">
        <title>Rice homologs of the barley low-temperature induced gene blt101 are differentially regulated by ABA, methyl jasmonate, ethephon, and drought stress.</title>
        <authorList>
            <person name="Akiyama T."/>
        </authorList>
    </citation>
    <scope>NUCLEOTIDE SEQUENCE [MRNA]</scope>
    <source>
        <strain>cv. Yukihikari</strain>
    </source>
</reference>
<reference key="3">
    <citation type="journal article" date="2005" name="Nature">
        <title>The map-based sequence of the rice genome.</title>
        <authorList>
            <consortium name="International rice genome sequencing project (IRGSP)"/>
        </authorList>
    </citation>
    <scope>NUCLEOTIDE SEQUENCE [LARGE SCALE GENOMIC DNA]</scope>
    <source>
        <strain>cv. Nipponbare</strain>
    </source>
</reference>
<reference key="4">
    <citation type="journal article" date="2008" name="Nucleic Acids Res.">
        <title>The rice annotation project database (RAP-DB): 2008 update.</title>
        <authorList>
            <consortium name="The rice annotation project (RAP)"/>
        </authorList>
    </citation>
    <scope>GENOME REANNOTATION</scope>
    <source>
        <strain>cv. Nipponbare</strain>
    </source>
</reference>
<reference key="5">
    <citation type="journal article" date="2013" name="Rice">
        <title>Improvement of the Oryza sativa Nipponbare reference genome using next generation sequence and optical map data.</title>
        <authorList>
            <person name="Kawahara Y."/>
            <person name="de la Bastide M."/>
            <person name="Hamilton J.P."/>
            <person name="Kanamori H."/>
            <person name="McCombie W.R."/>
            <person name="Ouyang S."/>
            <person name="Schwartz D.C."/>
            <person name="Tanaka T."/>
            <person name="Wu J."/>
            <person name="Zhou S."/>
            <person name="Childs K.L."/>
            <person name="Davidson R.M."/>
            <person name="Lin H."/>
            <person name="Quesada-Ocampo L."/>
            <person name="Vaillancourt B."/>
            <person name="Sakai H."/>
            <person name="Lee S.S."/>
            <person name="Kim J."/>
            <person name="Numa H."/>
            <person name="Itoh T."/>
            <person name="Buell C.R."/>
            <person name="Matsumoto T."/>
        </authorList>
    </citation>
    <scope>GENOME REANNOTATION</scope>
    <source>
        <strain>cv. Nipponbare</strain>
    </source>
</reference>
<reference key="6">
    <citation type="journal article" date="2005" name="PLoS Biol.">
        <title>The genomes of Oryza sativa: a history of duplications.</title>
        <authorList>
            <person name="Yu J."/>
            <person name="Wang J."/>
            <person name="Lin W."/>
            <person name="Li S."/>
            <person name="Li H."/>
            <person name="Zhou J."/>
            <person name="Ni P."/>
            <person name="Dong W."/>
            <person name="Hu S."/>
            <person name="Zeng C."/>
            <person name="Zhang J."/>
            <person name="Zhang Y."/>
            <person name="Li R."/>
            <person name="Xu Z."/>
            <person name="Li S."/>
            <person name="Li X."/>
            <person name="Zheng H."/>
            <person name="Cong L."/>
            <person name="Lin L."/>
            <person name="Yin J."/>
            <person name="Geng J."/>
            <person name="Li G."/>
            <person name="Shi J."/>
            <person name="Liu J."/>
            <person name="Lv H."/>
            <person name="Li J."/>
            <person name="Wang J."/>
            <person name="Deng Y."/>
            <person name="Ran L."/>
            <person name="Shi X."/>
            <person name="Wang X."/>
            <person name="Wu Q."/>
            <person name="Li C."/>
            <person name="Ren X."/>
            <person name="Wang J."/>
            <person name="Wang X."/>
            <person name="Li D."/>
            <person name="Liu D."/>
            <person name="Zhang X."/>
            <person name="Ji Z."/>
            <person name="Zhao W."/>
            <person name="Sun Y."/>
            <person name="Zhang Z."/>
            <person name="Bao J."/>
            <person name="Han Y."/>
            <person name="Dong L."/>
            <person name="Ji J."/>
            <person name="Chen P."/>
            <person name="Wu S."/>
            <person name="Liu J."/>
            <person name="Xiao Y."/>
            <person name="Bu D."/>
            <person name="Tan J."/>
            <person name="Yang L."/>
            <person name="Ye C."/>
            <person name="Zhang J."/>
            <person name="Xu J."/>
            <person name="Zhou Y."/>
            <person name="Yu Y."/>
            <person name="Zhang B."/>
            <person name="Zhuang S."/>
            <person name="Wei H."/>
            <person name="Liu B."/>
            <person name="Lei M."/>
            <person name="Yu H."/>
            <person name="Li Y."/>
            <person name="Xu H."/>
            <person name="Wei S."/>
            <person name="He X."/>
            <person name="Fang L."/>
            <person name="Zhang Z."/>
            <person name="Zhang Y."/>
            <person name="Huang X."/>
            <person name="Su Z."/>
            <person name="Tong W."/>
            <person name="Li J."/>
            <person name="Tong Z."/>
            <person name="Li S."/>
            <person name="Ye J."/>
            <person name="Wang L."/>
            <person name="Fang L."/>
            <person name="Lei T."/>
            <person name="Chen C.-S."/>
            <person name="Chen H.-C."/>
            <person name="Xu Z."/>
            <person name="Li H."/>
            <person name="Huang H."/>
            <person name="Zhang F."/>
            <person name="Xu H."/>
            <person name="Li N."/>
            <person name="Zhao C."/>
            <person name="Li S."/>
            <person name="Dong L."/>
            <person name="Huang Y."/>
            <person name="Li L."/>
            <person name="Xi Y."/>
            <person name="Qi Q."/>
            <person name="Li W."/>
            <person name="Zhang B."/>
            <person name="Hu W."/>
            <person name="Zhang Y."/>
            <person name="Tian X."/>
            <person name="Jiao Y."/>
            <person name="Liang X."/>
            <person name="Jin J."/>
            <person name="Gao L."/>
            <person name="Zheng W."/>
            <person name="Hao B."/>
            <person name="Liu S.-M."/>
            <person name="Wang W."/>
            <person name="Yuan L."/>
            <person name="Cao M."/>
            <person name="McDermott J."/>
            <person name="Samudrala R."/>
            <person name="Wang J."/>
            <person name="Wong G.K.-S."/>
            <person name="Yang H."/>
        </authorList>
    </citation>
    <scope>NUCLEOTIDE SEQUENCE [LARGE SCALE GENOMIC DNA]</scope>
    <source>
        <strain>cv. Nipponbare</strain>
    </source>
</reference>
<reference key="7">
    <citation type="journal article" date="2003" name="Science">
        <title>Collection, mapping, and annotation of over 28,000 cDNA clones from japonica rice.</title>
        <authorList>
            <consortium name="The rice full-length cDNA consortium"/>
        </authorList>
    </citation>
    <scope>NUCLEOTIDE SEQUENCE [LARGE SCALE MRNA]</scope>
    <source>
        <strain>cv. Nipponbare</strain>
    </source>
</reference>
<protein>
    <recommendedName>
        <fullName>Hydrophobic protein LTI6A</fullName>
    </recommendedName>
    <alternativeName>
        <fullName>Low temperature-induced protein 6A</fullName>
    </alternativeName>
</protein>
<organism>
    <name type="scientific">Oryza sativa subsp. japonica</name>
    <name type="common">Rice</name>
    <dbReference type="NCBI Taxonomy" id="39947"/>
    <lineage>
        <taxon>Eukaryota</taxon>
        <taxon>Viridiplantae</taxon>
        <taxon>Streptophyta</taxon>
        <taxon>Embryophyta</taxon>
        <taxon>Tracheophyta</taxon>
        <taxon>Spermatophyta</taxon>
        <taxon>Magnoliopsida</taxon>
        <taxon>Liliopsida</taxon>
        <taxon>Poales</taxon>
        <taxon>Poaceae</taxon>
        <taxon>BOP clade</taxon>
        <taxon>Oryzoideae</taxon>
        <taxon>Oryzeae</taxon>
        <taxon>Oryzinae</taxon>
        <taxon>Oryza</taxon>
        <taxon>Oryza sativa</taxon>
    </lineage>
</organism>
<keyword id="KW-0472">Membrane</keyword>
<keyword id="KW-1185">Reference proteome</keyword>
<keyword id="KW-0812">Transmembrane</keyword>
<keyword id="KW-1133">Transmembrane helix</keyword>
<accession>Q8H5T6</accession>
<accession>Q0D4B9</accession>
<evidence type="ECO:0000250" key="1"/>
<evidence type="ECO:0000255" key="2"/>
<evidence type="ECO:0000269" key="3">
    <source>
    </source>
</evidence>
<evidence type="ECO:0000305" key="4"/>
<evidence type="ECO:0000312" key="5">
    <source>
        <dbReference type="EMBL" id="EAZ40796.1"/>
    </source>
</evidence>
<dbReference type="EMBL" id="AY607689">
    <property type="protein sequence ID" value="AAT37941.1"/>
    <property type="molecule type" value="mRNA"/>
</dbReference>
<dbReference type="EMBL" id="AY554050">
    <property type="protein sequence ID" value="AAS72305.1"/>
    <property type="molecule type" value="mRNA"/>
</dbReference>
<dbReference type="EMBL" id="AP003749">
    <property type="protein sequence ID" value="BAC16385.1"/>
    <property type="molecule type" value="Genomic_DNA"/>
</dbReference>
<dbReference type="EMBL" id="AP008213">
    <property type="protein sequence ID" value="BAF22304.1"/>
    <property type="molecule type" value="Genomic_DNA"/>
</dbReference>
<dbReference type="EMBL" id="AP014963">
    <property type="protein sequence ID" value="BAT02817.1"/>
    <property type="molecule type" value="Genomic_DNA"/>
</dbReference>
<dbReference type="EMBL" id="CM000144">
    <property type="protein sequence ID" value="EAZ40796.1"/>
    <property type="molecule type" value="Genomic_DNA"/>
</dbReference>
<dbReference type="EMBL" id="AK121089">
    <property type="protein sequence ID" value="BAH00311.1"/>
    <property type="molecule type" value="mRNA"/>
</dbReference>
<dbReference type="RefSeq" id="XP_015647973.1">
    <property type="nucleotide sequence ID" value="XM_015792487.1"/>
</dbReference>
<dbReference type="FunCoup" id="Q8H5T6">
    <property type="interactions" value="68"/>
</dbReference>
<dbReference type="STRING" id="39947.Q8H5T6"/>
<dbReference type="PaxDb" id="39947-Q8H5T6"/>
<dbReference type="EnsemblPlants" id="Os07t0635900-01">
    <property type="protein sequence ID" value="Os07t0635900-01"/>
    <property type="gene ID" value="Os07g0635900"/>
</dbReference>
<dbReference type="Gramene" id="Os07t0635900-01">
    <property type="protein sequence ID" value="Os07t0635900-01"/>
    <property type="gene ID" value="Os07g0635900"/>
</dbReference>
<dbReference type="KEGG" id="dosa:Os07g0635900"/>
<dbReference type="eggNOG" id="KOG1773">
    <property type="taxonomic scope" value="Eukaryota"/>
</dbReference>
<dbReference type="HOGENOM" id="CLU_107649_6_2_1"/>
<dbReference type="InParanoid" id="Q8H5T6"/>
<dbReference type="OMA" id="EKGCDYH"/>
<dbReference type="OrthoDB" id="1851890at2759"/>
<dbReference type="Proteomes" id="UP000000763">
    <property type="component" value="Chromosome 7"/>
</dbReference>
<dbReference type="Proteomes" id="UP000007752">
    <property type="component" value="Chromosome 7"/>
</dbReference>
<dbReference type="Proteomes" id="UP000059680">
    <property type="component" value="Chromosome 7"/>
</dbReference>
<dbReference type="GO" id="GO:0016020">
    <property type="term" value="C:membrane"/>
    <property type="evidence" value="ECO:0007669"/>
    <property type="project" value="UniProtKB-SubCell"/>
</dbReference>
<dbReference type="GO" id="GO:0009737">
    <property type="term" value="P:response to abscisic acid"/>
    <property type="evidence" value="ECO:0000270"/>
    <property type="project" value="Gramene"/>
</dbReference>
<dbReference type="GO" id="GO:0009409">
    <property type="term" value="P:response to cold"/>
    <property type="evidence" value="ECO:0000270"/>
    <property type="project" value="Gramene"/>
</dbReference>
<dbReference type="GO" id="GO:0009651">
    <property type="term" value="P:response to salt stress"/>
    <property type="evidence" value="ECO:0000270"/>
    <property type="project" value="Gramene"/>
</dbReference>
<dbReference type="GO" id="GO:0009414">
    <property type="term" value="P:response to water deprivation"/>
    <property type="evidence" value="ECO:0000270"/>
    <property type="project" value="Gramene"/>
</dbReference>
<dbReference type="InterPro" id="IPR000612">
    <property type="entry name" value="PMP3"/>
</dbReference>
<dbReference type="PANTHER" id="PTHR21659:SF70">
    <property type="entry name" value="HYDROPHOBIC PROTEIN LTI6A"/>
    <property type="match status" value="1"/>
</dbReference>
<dbReference type="PANTHER" id="PTHR21659">
    <property type="entry name" value="HYDROPHOBIC PROTEIN RCI2 LOW TEMPERATURE AND SALT RESPONSIVE PROTEIN LTI6 -RELATED"/>
    <property type="match status" value="1"/>
</dbReference>
<dbReference type="Pfam" id="PF01679">
    <property type="entry name" value="Pmp3"/>
    <property type="match status" value="1"/>
</dbReference>
<dbReference type="PROSITE" id="PS01309">
    <property type="entry name" value="UPF0057"/>
    <property type="match status" value="1"/>
</dbReference>